<gene>
    <name evidence="6" type="primary">PIGW</name>
</gene>
<name>PIGW_HUMAN</name>
<feature type="chain" id="PRO_0000246282" description="Glucosaminyl-phosphatidylinositol-acyltransferase PIGW">
    <location>
        <begin position="1"/>
        <end position="504"/>
    </location>
</feature>
<feature type="topological domain" description="Lumenal" evidence="1">
    <location>
        <begin position="1"/>
        <end position="21"/>
    </location>
</feature>
<feature type="transmembrane region" description="Helical" evidence="2">
    <location>
        <begin position="22"/>
        <end position="42"/>
    </location>
</feature>
<feature type="topological domain" description="Cytoplasmic" evidence="1">
    <location>
        <begin position="43"/>
        <end position="56"/>
    </location>
</feature>
<feature type="transmembrane region" description="Helical" evidence="2">
    <location>
        <begin position="57"/>
        <end position="75"/>
    </location>
</feature>
<feature type="topological domain" description="Lumenal" evidence="1">
    <location>
        <begin position="76"/>
        <end position="81"/>
    </location>
</feature>
<feature type="transmembrane region" description="Helical" evidence="2">
    <location>
        <begin position="82"/>
        <end position="98"/>
    </location>
</feature>
<feature type="topological domain" description="Cytoplasmic" evidence="1">
    <location>
        <begin position="99"/>
        <end position="131"/>
    </location>
</feature>
<feature type="transmembrane region" description="Helical" evidence="2">
    <location>
        <begin position="132"/>
        <end position="152"/>
    </location>
</feature>
<feature type="topological domain" description="Lumenal" evidence="1">
    <location>
        <begin position="153"/>
        <end position="162"/>
    </location>
</feature>
<feature type="transmembrane region" description="Helical" evidence="2">
    <location>
        <begin position="163"/>
        <end position="183"/>
    </location>
</feature>
<feature type="topological domain" description="Cytoplasmic" evidence="1">
    <location>
        <begin position="184"/>
        <end position="202"/>
    </location>
</feature>
<feature type="transmembrane region" description="Helical" evidence="2">
    <location>
        <begin position="203"/>
        <end position="223"/>
    </location>
</feature>
<feature type="topological domain" description="Lumenal" evidence="1">
    <location>
        <begin position="224"/>
        <end position="237"/>
    </location>
</feature>
<feature type="transmembrane region" description="Helical" evidence="2">
    <location>
        <begin position="238"/>
        <end position="258"/>
    </location>
</feature>
<feature type="topological domain" description="Cytoplasmic" evidence="1">
    <location>
        <begin position="259"/>
        <end position="260"/>
    </location>
</feature>
<feature type="transmembrane region" description="Helical" evidence="2">
    <location>
        <begin position="261"/>
        <end position="281"/>
    </location>
</feature>
<feature type="topological domain" description="Lumenal" evidence="1">
    <location>
        <begin position="282"/>
        <end position="305"/>
    </location>
</feature>
<feature type="transmembrane region" description="Helical" evidence="2">
    <location>
        <begin position="306"/>
        <end position="326"/>
    </location>
</feature>
<feature type="topological domain" description="Cytoplasmic" evidence="1">
    <location>
        <begin position="327"/>
        <end position="338"/>
    </location>
</feature>
<feature type="transmembrane region" description="Helical" evidence="2">
    <location>
        <begin position="339"/>
        <end position="359"/>
    </location>
</feature>
<feature type="topological domain" description="Lumenal" evidence="1">
    <location>
        <begin position="360"/>
        <end position="370"/>
    </location>
</feature>
<feature type="transmembrane region" description="Helical" evidence="2">
    <location>
        <begin position="371"/>
        <end position="391"/>
    </location>
</feature>
<feature type="topological domain" description="Cytoplasmic" evidence="1">
    <location>
        <begin position="392"/>
        <end position="448"/>
    </location>
</feature>
<feature type="transmembrane region" description="Helical" evidence="2">
    <location>
        <begin position="449"/>
        <end position="469"/>
    </location>
</feature>
<feature type="topological domain" description="Lumenal" evidence="1">
    <location>
        <begin position="470"/>
        <end position="473"/>
    </location>
</feature>
<feature type="transmembrane region" description="Helical" evidence="2">
    <location>
        <begin position="474"/>
        <end position="494"/>
    </location>
</feature>
<feature type="topological domain" description="Cytoplasmic" evidence="1">
    <location>
        <begin position="495"/>
        <end position="504"/>
    </location>
</feature>
<feature type="modified residue" description="Phosphoserine" evidence="7">
    <location>
        <position position="416"/>
    </location>
</feature>
<feature type="glycosylation site" description="N-linked (GlcNAc...) asparagine" evidence="2">
    <location>
        <position position="15"/>
    </location>
</feature>
<feature type="sequence variant" id="VAR_071933" description="In GPIBD11; reduced protein abundance; decreased function in GPI-anchored protein transport; dbSNP:rs587777733." evidence="3">
    <original>T</original>
    <variation>P</variation>
    <location>
        <position position="71"/>
    </location>
</feature>
<feature type="sequence variant" id="VAR_071934" description="In GPIBD11; no effect on protein abundance; loss of function in GPI-anchored protein transport; dbSNP:rs200024253." evidence="3">
    <original>M</original>
    <variation>V</variation>
    <location>
        <position position="167"/>
    </location>
</feature>
<feature type="sequence conflict" description="In Ref. 2; BAC04413." evidence="5" ref="2">
    <original>N</original>
    <variation>D</variation>
    <location>
        <position position="126"/>
    </location>
</feature>
<dbReference type="EC" id="2.3.-.-" evidence="1"/>
<dbReference type="EMBL" id="AB097818">
    <property type="protein sequence ID" value="BAC77021.1"/>
    <property type="molecule type" value="mRNA"/>
</dbReference>
<dbReference type="EMBL" id="AK094752">
    <property type="protein sequence ID" value="BAC04413.1"/>
    <property type="molecule type" value="mRNA"/>
</dbReference>
<dbReference type="CCDS" id="CCDS11313.1"/>
<dbReference type="RefSeq" id="NP_001333683.1">
    <property type="nucleotide sequence ID" value="NM_001346754.2"/>
</dbReference>
<dbReference type="RefSeq" id="NP_001333684.1">
    <property type="nucleotide sequence ID" value="NM_001346755.2"/>
</dbReference>
<dbReference type="RefSeq" id="NP_848612.2">
    <property type="nucleotide sequence ID" value="NM_178517.5"/>
</dbReference>
<dbReference type="SMR" id="Q7Z7B1"/>
<dbReference type="BioGRID" id="129756">
    <property type="interactions" value="26"/>
</dbReference>
<dbReference type="FunCoup" id="Q7Z7B1">
    <property type="interactions" value="820"/>
</dbReference>
<dbReference type="IntAct" id="Q7Z7B1">
    <property type="interactions" value="20"/>
</dbReference>
<dbReference type="STRING" id="9606.ENSP00000482202"/>
<dbReference type="ChEMBL" id="CHEMBL4523365"/>
<dbReference type="GlyCosmos" id="Q7Z7B1">
    <property type="glycosylation" value="1 site, No reported glycans"/>
</dbReference>
<dbReference type="GlyGen" id="Q7Z7B1">
    <property type="glycosylation" value="2 sites, 1 N-linked glycan (1 site)"/>
</dbReference>
<dbReference type="iPTMnet" id="Q7Z7B1"/>
<dbReference type="PhosphoSitePlus" id="Q7Z7B1"/>
<dbReference type="SwissPalm" id="Q7Z7B1"/>
<dbReference type="BioMuta" id="PIGW"/>
<dbReference type="DMDM" id="74713752"/>
<dbReference type="jPOST" id="Q7Z7B1"/>
<dbReference type="MassIVE" id="Q7Z7B1"/>
<dbReference type="PaxDb" id="9606-ENSP00000482202"/>
<dbReference type="PeptideAtlas" id="Q7Z7B1"/>
<dbReference type="ProteomicsDB" id="69510"/>
<dbReference type="Antibodypedia" id="74148">
    <property type="antibodies" value="98 antibodies from 23 providers"/>
</dbReference>
<dbReference type="DNASU" id="284098"/>
<dbReference type="Ensembl" id="ENST00000614443.2">
    <property type="protein sequence ID" value="ENSP00000482202.1"/>
    <property type="gene ID" value="ENSG00000277161.2"/>
</dbReference>
<dbReference type="Ensembl" id="ENST00000616581.2">
    <property type="protein sequence ID" value="ENSP00000481144.1"/>
    <property type="gene ID" value="ENSG00000275600.2"/>
</dbReference>
<dbReference type="Ensembl" id="ENST00000620233.1">
    <property type="protein sequence ID" value="ENSP00000480021.1"/>
    <property type="gene ID" value="ENSG00000277161.2"/>
</dbReference>
<dbReference type="Ensembl" id="ENST00000631508.1">
    <property type="protein sequence ID" value="ENSP00000488033.1"/>
    <property type="gene ID" value="ENSG00000275600.2"/>
</dbReference>
<dbReference type="GeneID" id="284098"/>
<dbReference type="KEGG" id="hsa:284098"/>
<dbReference type="MANE-Select" id="ENST00000614443.2">
    <property type="protein sequence ID" value="ENSP00000482202.1"/>
    <property type="RefSeq nucleotide sequence ID" value="NM_001346754.2"/>
    <property type="RefSeq protein sequence ID" value="NP_001333683.1"/>
</dbReference>
<dbReference type="UCSC" id="uc002hmz.2">
    <property type="organism name" value="human"/>
</dbReference>
<dbReference type="AGR" id="HGNC:23213"/>
<dbReference type="CTD" id="284098"/>
<dbReference type="DisGeNET" id="284098"/>
<dbReference type="GeneCards" id="PIGW"/>
<dbReference type="HGNC" id="HGNC:23213">
    <property type="gene designation" value="PIGW"/>
</dbReference>
<dbReference type="HPA" id="ENSG00000277161">
    <property type="expression patterns" value="Low tissue specificity"/>
</dbReference>
<dbReference type="MalaCards" id="PIGW"/>
<dbReference type="MIM" id="610275">
    <property type="type" value="gene"/>
</dbReference>
<dbReference type="MIM" id="616025">
    <property type="type" value="phenotype"/>
</dbReference>
<dbReference type="neXtProt" id="NX_Q7Z7B1"/>
<dbReference type="OpenTargets" id="ENSG00000277161"/>
<dbReference type="Orphanet" id="83639">
    <property type="disease" value="Hypercoagulability syndrome due to glycosylphosphatidylinositol deficiency"/>
</dbReference>
<dbReference type="Orphanet" id="247262">
    <property type="disease" value="Hyperphosphatasia-intellectual disability syndrome"/>
</dbReference>
<dbReference type="PharmGKB" id="PA134894412"/>
<dbReference type="VEuPathDB" id="HostDB:ENSG00000277161"/>
<dbReference type="eggNOG" id="KOG0411">
    <property type="taxonomic scope" value="Eukaryota"/>
</dbReference>
<dbReference type="GeneTree" id="ENSGT00390000013520"/>
<dbReference type="HOGENOM" id="CLU_020802_2_1_1"/>
<dbReference type="InParanoid" id="Q7Z7B1"/>
<dbReference type="OMA" id="GLYVMQP"/>
<dbReference type="OrthoDB" id="15270at2759"/>
<dbReference type="PAN-GO" id="Q7Z7B1">
    <property type="GO annotations" value="3 GO annotations based on evolutionary models"/>
</dbReference>
<dbReference type="PhylomeDB" id="Q7Z7B1"/>
<dbReference type="PathwayCommons" id="Q7Z7B1"/>
<dbReference type="Reactome" id="R-HSA-162710">
    <property type="pathway name" value="Synthesis of glycosylphosphatidylinositol (GPI)"/>
</dbReference>
<dbReference type="SignaLink" id="Q7Z7B1"/>
<dbReference type="UniPathway" id="UPA00196"/>
<dbReference type="BioGRID-ORCS" id="284098">
    <property type="hits" value="83 hits in 1153 CRISPR screens"/>
</dbReference>
<dbReference type="ChiTaRS" id="PIGW">
    <property type="organism name" value="human"/>
</dbReference>
<dbReference type="GenomeRNAi" id="284098"/>
<dbReference type="Pharos" id="Q7Z7B1">
    <property type="development level" value="Tbio"/>
</dbReference>
<dbReference type="PRO" id="PR:Q7Z7B1"/>
<dbReference type="Proteomes" id="UP000005640">
    <property type="component" value="Chromosome 17"/>
</dbReference>
<dbReference type="RNAct" id="Q7Z7B1">
    <property type="molecule type" value="protein"/>
</dbReference>
<dbReference type="Bgee" id="ENSG00000277161">
    <property type="expression patterns" value="Expressed in islet of Langerhans and 101 other cell types or tissues"/>
</dbReference>
<dbReference type="ExpressionAtlas" id="Q7Z7B1">
    <property type="expression patterns" value="baseline and differential"/>
</dbReference>
<dbReference type="GO" id="GO:0005789">
    <property type="term" value="C:endoplasmic reticulum membrane"/>
    <property type="evidence" value="ECO:0000250"/>
    <property type="project" value="UniProtKB"/>
</dbReference>
<dbReference type="GO" id="GO:0032216">
    <property type="term" value="F:glucosaminyl-phosphatidylinositol O-acyltransferase activity"/>
    <property type="evidence" value="ECO:0000250"/>
    <property type="project" value="UniProtKB"/>
</dbReference>
<dbReference type="GO" id="GO:0008374">
    <property type="term" value="F:O-acyltransferase activity"/>
    <property type="evidence" value="ECO:0000304"/>
    <property type="project" value="Reactome"/>
</dbReference>
<dbReference type="GO" id="GO:0006506">
    <property type="term" value="P:GPI anchor biosynthetic process"/>
    <property type="evidence" value="ECO:0000250"/>
    <property type="project" value="UniProtKB"/>
</dbReference>
<dbReference type="GO" id="GO:0006505">
    <property type="term" value="P:GPI anchor metabolic process"/>
    <property type="evidence" value="ECO:0000305"/>
    <property type="project" value="UniProtKB"/>
</dbReference>
<dbReference type="GO" id="GO:0072659">
    <property type="term" value="P:protein localization to plasma membrane"/>
    <property type="evidence" value="ECO:0000315"/>
    <property type="project" value="UniProtKB"/>
</dbReference>
<dbReference type="InterPro" id="IPR009447">
    <property type="entry name" value="PIGW/GWT1"/>
</dbReference>
<dbReference type="PANTHER" id="PTHR20661">
    <property type="entry name" value="PHOSPHATIDYLINOSITOL-GLYCAN BIOSYNTHESIS CLASS W PROTEIN"/>
    <property type="match status" value="1"/>
</dbReference>
<dbReference type="PANTHER" id="PTHR20661:SF0">
    <property type="entry name" value="PHOSPHATIDYLINOSITOL-GLYCAN BIOSYNTHESIS CLASS W PROTEIN"/>
    <property type="match status" value="1"/>
</dbReference>
<dbReference type="Pfam" id="PF06423">
    <property type="entry name" value="GWT1"/>
    <property type="match status" value="1"/>
</dbReference>
<dbReference type="PIRSF" id="PIRSF017321">
    <property type="entry name" value="GWT1"/>
    <property type="match status" value="1"/>
</dbReference>
<comment type="function">
    <text evidence="1 3">Acyltransferase that catalyzes the acyl transfer from an acyl-CoA at the 2-OH position of the inositol ring of glucosaminyl phosphatidylinositol (GlcN-PI) to generate glucosaminyl acyl phosphatidylinositol (GlcN-(acyl)PI) and participates in the fourth step of GPI-anchor biosynthesis (By similarity). Required for the transport of GPI-anchored proteins to the plasma membrane (PubMed:24367057). Acetylation during GPI-anchor biosynthesis is not essential for the subsequent mannosylation and is usually removed soon after the attachment of GPIs to proteins (By similarity).</text>
</comment>
<comment type="pathway">
    <text evidence="1">Glycolipid biosynthesis; glycosylphosphatidylinositol-anchor biosynthesis.</text>
</comment>
<comment type="subcellular location">
    <subcellularLocation>
        <location evidence="1">Endoplasmic reticulum membrane</location>
        <topology evidence="1">Multi-pass membrane protein</topology>
    </subcellularLocation>
</comment>
<comment type="disease" evidence="3">
    <disease id="DI-04229">
        <name>Glycosylphosphatidylinositol biosynthesis defect 11</name>
        <acronym>GPIBD11</acronym>
        <description>An autosomal recessive neurologic disorder characterized by developmental delay, intellectual disability, tonic seizures associated with hypsarrhythmia, dysmorphic facial features, and elevated serum alkaline phosphatase.</description>
        <dbReference type="MIM" id="616025"/>
    </disease>
    <text>The disease is caused by variants affecting the gene represented in this entry.</text>
</comment>
<comment type="similarity">
    <text evidence="5">Belongs to the PIGW family.</text>
</comment>
<evidence type="ECO:0000250" key="1">
    <source>
        <dbReference type="UniProtKB" id="Q7TSN4"/>
    </source>
</evidence>
<evidence type="ECO:0000255" key="2"/>
<evidence type="ECO:0000269" key="3">
    <source>
    </source>
</evidence>
<evidence type="ECO:0000303" key="4">
    <source>
    </source>
</evidence>
<evidence type="ECO:0000305" key="5"/>
<evidence type="ECO:0000312" key="6">
    <source>
        <dbReference type="HGNC" id="HGNC:23213"/>
    </source>
</evidence>
<evidence type="ECO:0007744" key="7">
    <source>
    </source>
</evidence>
<reference key="1">
    <citation type="journal article" date="2003" name="Mol. Biol. Cell">
        <title>PIG-W is critical for inositol acylation but not for flipping of glycosylphosphatidylinositol-anchor.</title>
        <authorList>
            <person name="Murakami Y."/>
            <person name="Siripanyapinyo U."/>
            <person name="Hong Y."/>
            <person name="Kang J.Y."/>
            <person name="Ishihara S."/>
            <person name="Nakakuma H."/>
            <person name="Maeda Y."/>
            <person name="Kinoshita T."/>
        </authorList>
    </citation>
    <scope>NUCLEOTIDE SEQUENCE [MRNA]</scope>
</reference>
<reference key="2">
    <citation type="journal article" date="2004" name="Nat. Genet.">
        <title>Complete sequencing and characterization of 21,243 full-length human cDNAs.</title>
        <authorList>
            <person name="Ota T."/>
            <person name="Suzuki Y."/>
            <person name="Nishikawa T."/>
            <person name="Otsuki T."/>
            <person name="Sugiyama T."/>
            <person name="Irie R."/>
            <person name="Wakamatsu A."/>
            <person name="Hayashi K."/>
            <person name="Sato H."/>
            <person name="Nagai K."/>
            <person name="Kimura K."/>
            <person name="Makita H."/>
            <person name="Sekine M."/>
            <person name="Obayashi M."/>
            <person name="Nishi T."/>
            <person name="Shibahara T."/>
            <person name="Tanaka T."/>
            <person name="Ishii S."/>
            <person name="Yamamoto J."/>
            <person name="Saito K."/>
            <person name="Kawai Y."/>
            <person name="Isono Y."/>
            <person name="Nakamura Y."/>
            <person name="Nagahari K."/>
            <person name="Murakami K."/>
            <person name="Yasuda T."/>
            <person name="Iwayanagi T."/>
            <person name="Wagatsuma M."/>
            <person name="Shiratori A."/>
            <person name="Sudo H."/>
            <person name="Hosoiri T."/>
            <person name="Kaku Y."/>
            <person name="Kodaira H."/>
            <person name="Kondo H."/>
            <person name="Sugawara M."/>
            <person name="Takahashi M."/>
            <person name="Kanda K."/>
            <person name="Yokoi T."/>
            <person name="Furuya T."/>
            <person name="Kikkawa E."/>
            <person name="Omura Y."/>
            <person name="Abe K."/>
            <person name="Kamihara K."/>
            <person name="Katsuta N."/>
            <person name="Sato K."/>
            <person name="Tanikawa M."/>
            <person name="Yamazaki M."/>
            <person name="Ninomiya K."/>
            <person name="Ishibashi T."/>
            <person name="Yamashita H."/>
            <person name="Murakawa K."/>
            <person name="Fujimori K."/>
            <person name="Tanai H."/>
            <person name="Kimata M."/>
            <person name="Watanabe M."/>
            <person name="Hiraoka S."/>
            <person name="Chiba Y."/>
            <person name="Ishida S."/>
            <person name="Ono Y."/>
            <person name="Takiguchi S."/>
            <person name="Watanabe S."/>
            <person name="Yosida M."/>
            <person name="Hotuta T."/>
            <person name="Kusano J."/>
            <person name="Kanehori K."/>
            <person name="Takahashi-Fujii A."/>
            <person name="Hara H."/>
            <person name="Tanase T.-O."/>
            <person name="Nomura Y."/>
            <person name="Togiya S."/>
            <person name="Komai F."/>
            <person name="Hara R."/>
            <person name="Takeuchi K."/>
            <person name="Arita M."/>
            <person name="Imose N."/>
            <person name="Musashino K."/>
            <person name="Yuuki H."/>
            <person name="Oshima A."/>
            <person name="Sasaki N."/>
            <person name="Aotsuka S."/>
            <person name="Yoshikawa Y."/>
            <person name="Matsunawa H."/>
            <person name="Ichihara T."/>
            <person name="Shiohata N."/>
            <person name="Sano S."/>
            <person name="Moriya S."/>
            <person name="Momiyama H."/>
            <person name="Satoh N."/>
            <person name="Takami S."/>
            <person name="Terashima Y."/>
            <person name="Suzuki O."/>
            <person name="Nakagawa S."/>
            <person name="Senoh A."/>
            <person name="Mizoguchi H."/>
            <person name="Goto Y."/>
            <person name="Shimizu F."/>
            <person name="Wakebe H."/>
            <person name="Hishigaki H."/>
            <person name="Watanabe T."/>
            <person name="Sugiyama A."/>
            <person name="Takemoto M."/>
            <person name="Kawakami B."/>
            <person name="Yamazaki M."/>
            <person name="Watanabe K."/>
            <person name="Kumagai A."/>
            <person name="Itakura S."/>
            <person name="Fukuzumi Y."/>
            <person name="Fujimori Y."/>
            <person name="Komiyama M."/>
            <person name="Tashiro H."/>
            <person name="Tanigami A."/>
            <person name="Fujiwara T."/>
            <person name="Ono T."/>
            <person name="Yamada K."/>
            <person name="Fujii Y."/>
            <person name="Ozaki K."/>
            <person name="Hirao M."/>
            <person name="Ohmori Y."/>
            <person name="Kawabata A."/>
            <person name="Hikiji T."/>
            <person name="Kobatake N."/>
            <person name="Inagaki H."/>
            <person name="Ikema Y."/>
            <person name="Okamoto S."/>
            <person name="Okitani R."/>
            <person name="Kawakami T."/>
            <person name="Noguchi S."/>
            <person name="Itoh T."/>
            <person name="Shigeta K."/>
            <person name="Senba T."/>
            <person name="Matsumura K."/>
            <person name="Nakajima Y."/>
            <person name="Mizuno T."/>
            <person name="Morinaga M."/>
            <person name="Sasaki M."/>
            <person name="Togashi T."/>
            <person name="Oyama M."/>
            <person name="Hata H."/>
            <person name="Watanabe M."/>
            <person name="Komatsu T."/>
            <person name="Mizushima-Sugano J."/>
            <person name="Satoh T."/>
            <person name="Shirai Y."/>
            <person name="Takahashi Y."/>
            <person name="Nakagawa K."/>
            <person name="Okumura K."/>
            <person name="Nagase T."/>
            <person name="Nomura N."/>
            <person name="Kikuchi H."/>
            <person name="Masuho Y."/>
            <person name="Yamashita R."/>
            <person name="Nakai K."/>
            <person name="Yada T."/>
            <person name="Nakamura Y."/>
            <person name="Ohara O."/>
            <person name="Isogai T."/>
            <person name="Sugano S."/>
        </authorList>
    </citation>
    <scope>NUCLEOTIDE SEQUENCE [LARGE SCALE MRNA]</scope>
    <source>
        <tissue>Brain</tissue>
    </source>
</reference>
<reference key="3">
    <citation type="journal article" date="2013" name="J. Proteome Res.">
        <title>Toward a comprehensive characterization of a human cancer cell phosphoproteome.</title>
        <authorList>
            <person name="Zhou H."/>
            <person name="Di Palma S."/>
            <person name="Preisinger C."/>
            <person name="Peng M."/>
            <person name="Polat A.N."/>
            <person name="Heck A.J."/>
            <person name="Mohammed S."/>
        </authorList>
    </citation>
    <scope>PHOSPHORYLATION [LARGE SCALE ANALYSIS] AT SER-416</scope>
    <scope>IDENTIFICATION BY MASS SPECTROMETRY [LARGE SCALE ANALYSIS]</scope>
    <source>
        <tissue>Erythroleukemia</tissue>
    </source>
</reference>
<reference key="4">
    <citation type="journal article" date="2014" name="J. Med. Genet.">
        <title>Glycosylphosphatidylinositol (GPI) anchor deficiency caused by mutations in PIGW is associated with West syndrome and hyperphosphatasia with mental retardation syndrome.</title>
        <authorList>
            <person name="Chiyonobu T."/>
            <person name="Inoue N."/>
            <person name="Morimoto M."/>
            <person name="Kinoshita T."/>
            <person name="Murakami Y."/>
        </authorList>
    </citation>
    <scope>INVOLVEMENT IN GPIBD11</scope>
    <scope>VARIANTS GPIBD11 PRO-71 AND VAL-167</scope>
    <scope>CHARACTERIZATION OF VARIANTS GPIBD11 PRO-71 AND VAL-167</scope>
    <scope>FUNCTION</scope>
</reference>
<keyword id="KW-0012">Acyltransferase</keyword>
<keyword id="KW-0225">Disease variant</keyword>
<keyword id="KW-0256">Endoplasmic reticulum</keyword>
<keyword id="KW-0325">Glycoprotein</keyword>
<keyword id="KW-0337">GPI-anchor biosynthesis</keyword>
<keyword id="KW-0991">Intellectual disability</keyword>
<keyword id="KW-0472">Membrane</keyword>
<keyword id="KW-0597">Phosphoprotein</keyword>
<keyword id="KW-1267">Proteomics identification</keyword>
<keyword id="KW-1185">Reference proteome</keyword>
<keyword id="KW-0808">Transferase</keyword>
<keyword id="KW-0812">Transmembrane</keyword>
<keyword id="KW-1133">Transmembrane helix</keyword>
<organism>
    <name type="scientific">Homo sapiens</name>
    <name type="common">Human</name>
    <dbReference type="NCBI Taxonomy" id="9606"/>
    <lineage>
        <taxon>Eukaryota</taxon>
        <taxon>Metazoa</taxon>
        <taxon>Chordata</taxon>
        <taxon>Craniata</taxon>
        <taxon>Vertebrata</taxon>
        <taxon>Euteleostomi</taxon>
        <taxon>Mammalia</taxon>
        <taxon>Eutheria</taxon>
        <taxon>Euarchontoglires</taxon>
        <taxon>Primates</taxon>
        <taxon>Haplorrhini</taxon>
        <taxon>Catarrhini</taxon>
        <taxon>Hominidae</taxon>
        <taxon>Homo</taxon>
    </lineage>
</organism>
<sequence length="504" mass="56882">MSEKQMKEAFVSNLNGTTVLEITQGLCFPAFCILCRGFLIIFSQYLCSFSPTWKTRFLTDFVVLIVPMVATLTIWASFILLELLGVIIFGAGLLYQIYRRRTCYARLPFLKILEKFLNISLESEYNPAISCFRVITSAFTAIAILAVDFPLFPRRFAKTELYGTGAMDFGVGGFVFGSAMVCLEVRRRKYMEGSKLHYFTNSLYSVWPLVFLGIGRLAIIKSIGYQEHLTEYGVHWNFFFTIIVVKLITPLLLIIFPLNKSWIIALGITVLYQLALDFTSLKRLILYGTDGSGTRVGLLNANREGIISTLGYVAIHMAGVQTGLYMHKNRSHIKDLIKVACFLLLAAISLFISLYVVQVNVEAVSRRMANLAFCIWIVASSLILLSSLLLGDIILSFAKFLIKGALVPCSWKLIQSPVTNKKHSESLVPEAERMEPSLCLITALNRKQLIFFLLSNITTGLINLMVDTLHSSTLWALFVVNLYMFSNCLIVYVLYLQDKTVQFW</sequence>
<protein>
    <recommendedName>
        <fullName evidence="5">Glucosaminyl-phosphatidylinositol-acyltransferase PIGW</fullName>
        <shortName>GlcN-PI-acyltransferase</shortName>
        <ecNumber evidence="1">2.3.-.-</ecNumber>
    </recommendedName>
    <alternativeName>
        <fullName evidence="5">Phosphatidylinositol-glycan biosynthesis class W protein</fullName>
        <shortName evidence="4">PIG-W</shortName>
    </alternativeName>
</protein>
<accession>Q7Z7B1</accession>
<accession>Q8N9G3</accession>
<proteinExistence type="evidence at protein level"/>